<reference key="1">
    <citation type="journal article" date="1997" name="Nature">
        <title>The complete genome sequence of the hyperthermophilic, sulphate-reducing archaeon Archaeoglobus fulgidus.</title>
        <authorList>
            <person name="Klenk H.-P."/>
            <person name="Clayton R.A."/>
            <person name="Tomb J.-F."/>
            <person name="White O."/>
            <person name="Nelson K.E."/>
            <person name="Ketchum K.A."/>
            <person name="Dodson R.J."/>
            <person name="Gwinn M.L."/>
            <person name="Hickey E.K."/>
            <person name="Peterson J.D."/>
            <person name="Richardson D.L."/>
            <person name="Kerlavage A.R."/>
            <person name="Graham D.E."/>
            <person name="Kyrpides N.C."/>
            <person name="Fleischmann R.D."/>
            <person name="Quackenbush J."/>
            <person name="Lee N.H."/>
            <person name="Sutton G.G."/>
            <person name="Gill S.R."/>
            <person name="Kirkness E.F."/>
            <person name="Dougherty B.A."/>
            <person name="McKenney K."/>
            <person name="Adams M.D."/>
            <person name="Loftus B.J."/>
            <person name="Peterson S.N."/>
            <person name="Reich C.I."/>
            <person name="McNeil L.K."/>
            <person name="Badger J.H."/>
            <person name="Glodek A."/>
            <person name="Zhou L."/>
            <person name="Overbeek R."/>
            <person name="Gocayne J.D."/>
            <person name="Weidman J.F."/>
            <person name="McDonald L.A."/>
            <person name="Utterback T.R."/>
            <person name="Cotton M.D."/>
            <person name="Spriggs T."/>
            <person name="Artiach P."/>
            <person name="Kaine B.P."/>
            <person name="Sykes S.M."/>
            <person name="Sadow P.W."/>
            <person name="D'Andrea K.P."/>
            <person name="Bowman C."/>
            <person name="Fujii C."/>
            <person name="Garland S.A."/>
            <person name="Mason T.M."/>
            <person name="Olsen G.J."/>
            <person name="Fraser C.M."/>
            <person name="Smith H.O."/>
            <person name="Woese C.R."/>
            <person name="Venter J.C."/>
        </authorList>
    </citation>
    <scope>NUCLEOTIDE SEQUENCE [LARGE SCALE GENOMIC DNA]</scope>
    <source>
        <strain>ATCC 49558 / DSM 4304 / JCM 9628 / NBRC 100126 / VC-16</strain>
    </source>
</reference>
<name>PYRK_ARCFU</name>
<dbReference type="EMBL" id="AE000782">
    <property type="protein sequence ID" value="AAB90709.1"/>
    <property type="molecule type" value="Genomic_DNA"/>
</dbReference>
<dbReference type="PIR" id="H69315">
    <property type="entry name" value="H69315"/>
</dbReference>
<dbReference type="RefSeq" id="WP_010878035.1">
    <property type="nucleotide sequence ID" value="NC_000917.1"/>
</dbReference>
<dbReference type="SMR" id="O29722"/>
<dbReference type="STRING" id="224325.AF_0528"/>
<dbReference type="PaxDb" id="224325-AF_0528"/>
<dbReference type="EnsemblBacteria" id="AAB90709">
    <property type="protein sequence ID" value="AAB90709"/>
    <property type="gene ID" value="AF_0528"/>
</dbReference>
<dbReference type="KEGG" id="afu:AF_0528"/>
<dbReference type="eggNOG" id="arCOG02199">
    <property type="taxonomic scope" value="Archaea"/>
</dbReference>
<dbReference type="HOGENOM" id="CLU_003827_1_1_2"/>
<dbReference type="OrthoDB" id="35401at2157"/>
<dbReference type="PhylomeDB" id="O29722"/>
<dbReference type="UniPathway" id="UPA00070">
    <property type="reaction ID" value="UER00945"/>
</dbReference>
<dbReference type="Proteomes" id="UP000002199">
    <property type="component" value="Chromosome"/>
</dbReference>
<dbReference type="GO" id="GO:0051537">
    <property type="term" value="F:2 iron, 2 sulfur cluster binding"/>
    <property type="evidence" value="ECO:0007669"/>
    <property type="project" value="UniProtKB-KW"/>
</dbReference>
<dbReference type="GO" id="GO:0009055">
    <property type="term" value="F:electron transfer activity"/>
    <property type="evidence" value="ECO:0007669"/>
    <property type="project" value="UniProtKB-UniRule"/>
</dbReference>
<dbReference type="GO" id="GO:0050660">
    <property type="term" value="F:flavin adenine dinucleotide binding"/>
    <property type="evidence" value="ECO:0007669"/>
    <property type="project" value="InterPro"/>
</dbReference>
<dbReference type="GO" id="GO:0046872">
    <property type="term" value="F:metal ion binding"/>
    <property type="evidence" value="ECO:0007669"/>
    <property type="project" value="UniProtKB-KW"/>
</dbReference>
<dbReference type="GO" id="GO:0016491">
    <property type="term" value="F:oxidoreductase activity"/>
    <property type="evidence" value="ECO:0007669"/>
    <property type="project" value="InterPro"/>
</dbReference>
<dbReference type="GO" id="GO:0044205">
    <property type="term" value="P:'de novo' UMP biosynthetic process"/>
    <property type="evidence" value="ECO:0007669"/>
    <property type="project" value="UniProtKB-UniRule"/>
</dbReference>
<dbReference type="CDD" id="cd06220">
    <property type="entry name" value="DHOD_e_trans_like2"/>
    <property type="match status" value="1"/>
</dbReference>
<dbReference type="Gene3D" id="2.10.240.10">
    <property type="entry name" value="Dihydroorotate dehydrogenase, electron transfer subunit"/>
    <property type="match status" value="1"/>
</dbReference>
<dbReference type="Gene3D" id="3.40.50.80">
    <property type="entry name" value="Nucleotide-binding domain of ferredoxin-NADP reductase (FNR) module"/>
    <property type="match status" value="1"/>
</dbReference>
<dbReference type="Gene3D" id="2.40.30.10">
    <property type="entry name" value="Translation factors"/>
    <property type="match status" value="1"/>
</dbReference>
<dbReference type="HAMAP" id="MF_01211">
    <property type="entry name" value="DHODB_Fe_S_bind"/>
    <property type="match status" value="1"/>
</dbReference>
<dbReference type="InterPro" id="IPR012165">
    <property type="entry name" value="Cyt_c3_hydrogenase_gsu"/>
</dbReference>
<dbReference type="InterPro" id="IPR037117">
    <property type="entry name" value="Dihydroorotate_DH_ele_sf"/>
</dbReference>
<dbReference type="InterPro" id="IPR019480">
    <property type="entry name" value="Dihydroorotate_DH_Fe-S-bd"/>
</dbReference>
<dbReference type="InterPro" id="IPR023455">
    <property type="entry name" value="Dihydroorotate_DHASE_ETsu"/>
</dbReference>
<dbReference type="InterPro" id="IPR017927">
    <property type="entry name" value="FAD-bd_FR_type"/>
</dbReference>
<dbReference type="InterPro" id="IPR039261">
    <property type="entry name" value="FNR_nucleotide-bd"/>
</dbReference>
<dbReference type="InterPro" id="IPR001433">
    <property type="entry name" value="OxRdtase_FAD/NAD-bd"/>
</dbReference>
<dbReference type="InterPro" id="IPR050353">
    <property type="entry name" value="PyrK_electron_transfer"/>
</dbReference>
<dbReference type="InterPro" id="IPR017938">
    <property type="entry name" value="Riboflavin_synthase-like_b-brl"/>
</dbReference>
<dbReference type="NCBIfam" id="NF000796">
    <property type="entry name" value="PRK00054.1-1"/>
    <property type="match status" value="1"/>
</dbReference>
<dbReference type="PANTHER" id="PTHR43513">
    <property type="entry name" value="DIHYDROOROTATE DEHYDROGENASE B (NAD(+)), ELECTRON TRANSFER SUBUNIT"/>
    <property type="match status" value="1"/>
</dbReference>
<dbReference type="PANTHER" id="PTHR43513:SF3">
    <property type="entry name" value="DIHYDROOROTATE DEHYDROGENASE B (NAD(+)), ELECTRON TRANSFER SUBUNIT-RELATED"/>
    <property type="match status" value="1"/>
</dbReference>
<dbReference type="Pfam" id="PF10418">
    <property type="entry name" value="DHODB_Fe-S_bind"/>
    <property type="match status" value="1"/>
</dbReference>
<dbReference type="Pfam" id="PF00175">
    <property type="entry name" value="NAD_binding_1"/>
    <property type="match status" value="1"/>
</dbReference>
<dbReference type="PIRSF" id="PIRSF006816">
    <property type="entry name" value="Cyc3_hyd_g"/>
    <property type="match status" value="1"/>
</dbReference>
<dbReference type="SUPFAM" id="SSF52343">
    <property type="entry name" value="Ferredoxin reductase-like, C-terminal NADP-linked domain"/>
    <property type="match status" value="1"/>
</dbReference>
<dbReference type="SUPFAM" id="SSF63380">
    <property type="entry name" value="Riboflavin synthase domain-like"/>
    <property type="match status" value="1"/>
</dbReference>
<dbReference type="PROSITE" id="PS00197">
    <property type="entry name" value="2FE2S_FER_1"/>
    <property type="match status" value="1"/>
</dbReference>
<dbReference type="PROSITE" id="PS51384">
    <property type="entry name" value="FAD_FR"/>
    <property type="match status" value="1"/>
</dbReference>
<accession>O29722</accession>
<keyword id="KW-0001">2Fe-2S</keyword>
<keyword id="KW-0249">Electron transport</keyword>
<keyword id="KW-0274">FAD</keyword>
<keyword id="KW-0285">Flavoprotein</keyword>
<keyword id="KW-0408">Iron</keyword>
<keyword id="KW-0411">Iron-sulfur</keyword>
<keyword id="KW-0479">Metal-binding</keyword>
<keyword id="KW-0665">Pyrimidine biosynthesis</keyword>
<keyword id="KW-1185">Reference proteome</keyword>
<keyword id="KW-0813">Transport</keyword>
<gene>
    <name evidence="1" type="primary">pyrK</name>
    <name type="ordered locus">AF_0528</name>
</gene>
<comment type="function">
    <text evidence="1">Responsible for channeling the electrons from the oxidation of dihydroorotate from the FMN redox center in the PyrD type B subunit to the ultimate electron acceptor NAD(+).</text>
</comment>
<comment type="cofactor">
    <cofactor evidence="1">
        <name>[2Fe-2S] cluster</name>
        <dbReference type="ChEBI" id="CHEBI:190135"/>
    </cofactor>
    <text evidence="1">Binds 1 [2Fe-2S] cluster per subunit.</text>
</comment>
<comment type="cofactor">
    <cofactor evidence="1">
        <name>FAD</name>
        <dbReference type="ChEBI" id="CHEBI:57692"/>
    </cofactor>
    <text evidence="1">Binds 1 FAD per subunit.</text>
</comment>
<comment type="pathway">
    <text evidence="1">Pyrimidine metabolism; UMP biosynthesis via de novo pathway; orotate from (S)-dihydroorotate (NAD(+) route): step 1/1.</text>
</comment>
<comment type="subunit">
    <text evidence="1">Heterotetramer of 2 PyrK and 2 PyrD type B subunits.</text>
</comment>
<comment type="similarity">
    <text evidence="1">Belongs to the PyrK family.</text>
</comment>
<proteinExistence type="inferred from homology"/>
<protein>
    <recommendedName>
        <fullName evidence="1">Probable dihydroorotate dehydrogenase B (NAD(+)), electron transfer subunit</fullName>
    </recommendedName>
    <alternativeName>
        <fullName evidence="1">Dihydroorotate oxidase B, electron transfer subunit</fullName>
    </alternativeName>
</protein>
<feature type="chain" id="PRO_0000148373" description="Probable dihydroorotate dehydrogenase B (NAD(+)), electron transfer subunit">
    <location>
        <begin position="1"/>
        <end position="232"/>
    </location>
</feature>
<feature type="domain" description="FAD-binding FR-type" evidence="1">
    <location>
        <begin position="1"/>
        <end position="86"/>
    </location>
</feature>
<feature type="binding site" evidence="1">
    <location>
        <position position="202"/>
    </location>
    <ligand>
        <name>[2Fe-2S] cluster</name>
        <dbReference type="ChEBI" id="CHEBI:190135"/>
    </ligand>
</feature>
<feature type="binding site" evidence="1">
    <location>
        <position position="207"/>
    </location>
    <ligand>
        <name>[2Fe-2S] cluster</name>
        <dbReference type="ChEBI" id="CHEBI:190135"/>
    </ligand>
</feature>
<feature type="binding site" evidence="1">
    <location>
        <position position="210"/>
    </location>
    <ligand>
        <name>[2Fe-2S] cluster</name>
        <dbReference type="ChEBI" id="CHEBI:190135"/>
    </ligand>
</feature>
<feature type="binding site" evidence="1">
    <location>
        <position position="219"/>
    </location>
    <ligand>
        <name>[2Fe-2S] cluster</name>
        <dbReference type="ChEBI" id="CHEBI:190135"/>
    </ligand>
</feature>
<evidence type="ECO:0000255" key="1">
    <source>
        <dbReference type="HAMAP-Rule" id="MF_01211"/>
    </source>
</evidence>
<organism>
    <name type="scientific">Archaeoglobus fulgidus (strain ATCC 49558 / DSM 4304 / JCM 9628 / NBRC 100126 / VC-16)</name>
    <dbReference type="NCBI Taxonomy" id="224325"/>
    <lineage>
        <taxon>Archaea</taxon>
        <taxon>Methanobacteriati</taxon>
        <taxon>Methanobacteriota</taxon>
        <taxon>Archaeoglobi</taxon>
        <taxon>Archaeoglobales</taxon>
        <taxon>Archaeoglobaceae</taxon>
        <taxon>Archaeoglobus</taxon>
    </lineage>
</organism>
<sequence>MYYTRITQIERLTDEVATLYFSISLRSYPGQFVMVYVPGCEEIPLSLSSSNSVTVKAVGETTASLINAKEGQYVGVRGAFGSAFTPSKRALIVAGGIGIAPMKYLYEYLMKCGSKVSVVYGERTAKNLFWLDKFDRITVTTEDGSFGLKGTVLDALKLEKLDEYEKIYVCGSEGMLRATYDFLKERDALDKAEFSLERYMRCGIGVCGSCVIENGLRVCADGPVFNASELPW</sequence>